<accession>A3DHZ1</accession>
<sequence length="71" mass="8399">MFRRWVIYIIRLYQRWISPLKTMPSCRFYPTCSQYAIDAVGRYGVIKGGFMALKRILKCHPFHPGGYDPVK</sequence>
<comment type="function">
    <text evidence="1">Could be involved in insertion of integral membrane proteins into the membrane.</text>
</comment>
<comment type="subcellular location">
    <subcellularLocation>
        <location evidence="1">Cell membrane</location>
        <topology evidence="1">Peripheral membrane protein</topology>
        <orientation evidence="1">Cytoplasmic side</orientation>
    </subcellularLocation>
</comment>
<comment type="similarity">
    <text evidence="1">Belongs to the UPF0161 family.</text>
</comment>
<organism>
    <name type="scientific">Acetivibrio thermocellus (strain ATCC 27405 / DSM 1237 / JCM 9322 / NBRC 103400 / NCIMB 10682 / NRRL B-4536 / VPI 7372)</name>
    <name type="common">Clostridium thermocellum</name>
    <dbReference type="NCBI Taxonomy" id="203119"/>
    <lineage>
        <taxon>Bacteria</taxon>
        <taxon>Bacillati</taxon>
        <taxon>Bacillota</taxon>
        <taxon>Clostridia</taxon>
        <taxon>Eubacteriales</taxon>
        <taxon>Oscillospiraceae</taxon>
        <taxon>Acetivibrio</taxon>
    </lineage>
</organism>
<protein>
    <recommendedName>
        <fullName evidence="1">Putative membrane protein insertion efficiency factor</fullName>
    </recommendedName>
</protein>
<dbReference type="EMBL" id="CP000568">
    <property type="protein sequence ID" value="ABN53570.1"/>
    <property type="molecule type" value="Genomic_DNA"/>
</dbReference>
<dbReference type="STRING" id="203119.Cthe_2368"/>
<dbReference type="GeneID" id="35806183"/>
<dbReference type="KEGG" id="cth:Cthe_2368"/>
<dbReference type="eggNOG" id="COG0759">
    <property type="taxonomic scope" value="Bacteria"/>
</dbReference>
<dbReference type="HOGENOM" id="CLU_144811_6_0_9"/>
<dbReference type="OrthoDB" id="9801753at2"/>
<dbReference type="Proteomes" id="UP000002145">
    <property type="component" value="Chromosome"/>
</dbReference>
<dbReference type="GO" id="GO:0005886">
    <property type="term" value="C:plasma membrane"/>
    <property type="evidence" value="ECO:0007669"/>
    <property type="project" value="UniProtKB-SubCell"/>
</dbReference>
<dbReference type="HAMAP" id="MF_00386">
    <property type="entry name" value="UPF0161_YidD"/>
    <property type="match status" value="1"/>
</dbReference>
<dbReference type="InterPro" id="IPR002696">
    <property type="entry name" value="Membr_insert_effic_factor_YidD"/>
</dbReference>
<dbReference type="NCBIfam" id="TIGR00278">
    <property type="entry name" value="membrane protein insertion efficiency factor YidD"/>
    <property type="match status" value="1"/>
</dbReference>
<dbReference type="PANTHER" id="PTHR33383">
    <property type="entry name" value="MEMBRANE PROTEIN INSERTION EFFICIENCY FACTOR-RELATED"/>
    <property type="match status" value="1"/>
</dbReference>
<dbReference type="PANTHER" id="PTHR33383:SF1">
    <property type="entry name" value="MEMBRANE PROTEIN INSERTION EFFICIENCY FACTOR-RELATED"/>
    <property type="match status" value="1"/>
</dbReference>
<dbReference type="Pfam" id="PF01809">
    <property type="entry name" value="YidD"/>
    <property type="match status" value="1"/>
</dbReference>
<dbReference type="SMART" id="SM01234">
    <property type="entry name" value="Haemolytic"/>
    <property type="match status" value="1"/>
</dbReference>
<keyword id="KW-1003">Cell membrane</keyword>
<keyword id="KW-0472">Membrane</keyword>
<keyword id="KW-1185">Reference proteome</keyword>
<reference key="1">
    <citation type="submission" date="2007-02" db="EMBL/GenBank/DDBJ databases">
        <title>Complete sequence of Clostridium thermocellum ATCC 27405.</title>
        <authorList>
            <consortium name="US DOE Joint Genome Institute"/>
            <person name="Copeland A."/>
            <person name="Lucas S."/>
            <person name="Lapidus A."/>
            <person name="Barry K."/>
            <person name="Detter J.C."/>
            <person name="Glavina del Rio T."/>
            <person name="Hammon N."/>
            <person name="Israni S."/>
            <person name="Dalin E."/>
            <person name="Tice H."/>
            <person name="Pitluck S."/>
            <person name="Chertkov O."/>
            <person name="Brettin T."/>
            <person name="Bruce D."/>
            <person name="Han C."/>
            <person name="Tapia R."/>
            <person name="Gilna P."/>
            <person name="Schmutz J."/>
            <person name="Larimer F."/>
            <person name="Land M."/>
            <person name="Hauser L."/>
            <person name="Kyrpides N."/>
            <person name="Mikhailova N."/>
            <person name="Wu J.H.D."/>
            <person name="Newcomb M."/>
            <person name="Richardson P."/>
        </authorList>
    </citation>
    <scope>NUCLEOTIDE SEQUENCE [LARGE SCALE GENOMIC DNA]</scope>
    <source>
        <strain>ATCC 27405 / DSM 1237 / JCM 9322 / NBRC 103400 / NCIMB 10682 / NRRL B-4536 / VPI 7372</strain>
    </source>
</reference>
<evidence type="ECO:0000255" key="1">
    <source>
        <dbReference type="HAMAP-Rule" id="MF_00386"/>
    </source>
</evidence>
<name>YIDD_ACET2</name>
<feature type="chain" id="PRO_1000013087" description="Putative membrane protein insertion efficiency factor">
    <location>
        <begin position="1"/>
        <end position="71"/>
    </location>
</feature>
<proteinExistence type="inferred from homology"/>
<gene>
    <name type="ordered locus">Cthe_2368</name>
</gene>